<feature type="chain" id="PRO_0000083897" description="28 kDa heat- and acid-stable phosphoprotein">
    <location>
        <begin position="1"/>
        <end position="181"/>
    </location>
</feature>
<feature type="region of interest" description="Disordered" evidence="3">
    <location>
        <begin position="1"/>
        <end position="117"/>
    </location>
</feature>
<feature type="region of interest" description="Disordered" evidence="3">
    <location>
        <begin position="151"/>
        <end position="181"/>
    </location>
</feature>
<feature type="compositionally biased region" description="Basic residues" evidence="3">
    <location>
        <begin position="1"/>
        <end position="14"/>
    </location>
</feature>
<feature type="compositionally biased region" description="Basic and acidic residues" evidence="3">
    <location>
        <begin position="30"/>
        <end position="59"/>
    </location>
</feature>
<feature type="compositionally biased region" description="Acidic residues" evidence="3">
    <location>
        <begin position="60"/>
        <end position="69"/>
    </location>
</feature>
<feature type="compositionally biased region" description="Basic and acidic residues" evidence="3">
    <location>
        <begin position="102"/>
        <end position="117"/>
    </location>
</feature>
<feature type="compositionally biased region" description="Basic and acidic residues" evidence="3">
    <location>
        <begin position="151"/>
        <end position="167"/>
    </location>
</feature>
<feature type="modified residue" description="Phosphothreonine" evidence="14">
    <location>
        <position position="18"/>
    </location>
</feature>
<feature type="modified residue" description="Phosphoserine" evidence="9 12 14">
    <location>
        <position position="19"/>
    </location>
</feature>
<feature type="modified residue" description="Phosphoserine" evidence="8 9 12 16">
    <location>
        <position position="57"/>
    </location>
</feature>
<feature type="modified residue" description="Phosphoserine" evidence="7 8 9 11 12 13 14 16">
    <location>
        <position position="60"/>
    </location>
</feature>
<feature type="modified residue" description="Phosphoserine" evidence="5 6 7 8 9 11 12 13 14 16">
    <location>
        <position position="63"/>
    </location>
</feature>
<feature type="modified residue" description="Phosphotyrosine" evidence="2">
    <location>
        <position position="70"/>
    </location>
</feature>
<feature type="modified residue" description="N6-methyllysine" evidence="15">
    <location>
        <position position="126"/>
    </location>
</feature>
<feature type="modified residue" description="N6-acetyllysine" evidence="10">
    <location>
        <position position="132"/>
    </location>
</feature>
<feature type="modified residue" description="N6-acetyllysine" evidence="2">
    <location>
        <position position="164"/>
    </location>
</feature>
<feature type="modified residue" description="Phosphoserine" evidence="9 11 12 14">
    <location>
        <position position="176"/>
    </location>
</feature>
<feature type="modified residue" description="Phosphoserine" evidence="14">
    <location>
        <position position="178"/>
    </location>
</feature>
<feature type="cross-link" description="Glycyl lysine isopeptide (Lys-Gly) (interchain with G-Cter in SUMO2)" evidence="17">
    <location>
        <position position="52"/>
    </location>
</feature>
<feature type="sequence conflict" description="In Ref. 5; AAB07135." evidence="4" ref="5">
    <original>M</original>
    <variation>MI</variation>
    <location>
        <position position="1"/>
    </location>
</feature>
<feature type="sequence conflict" description="In Ref. 5; AAB07135." evidence="4" ref="5">
    <original>R</original>
    <variation>W</variation>
    <location>
        <position position="13"/>
    </location>
</feature>
<feature type="sequence conflict" description="In Ref. 5; AAB07135." evidence="4" ref="5">
    <original>A</original>
    <variation>T</variation>
    <location>
        <position position="25"/>
    </location>
</feature>
<feature type="sequence conflict" description="In Ref. 5; AAB07135." evidence="4" ref="5">
    <original>A</original>
    <variation>S</variation>
    <location>
        <position position="29"/>
    </location>
</feature>
<feature type="sequence conflict" description="In Ref. 5; AAB07135." evidence="4" ref="5">
    <original>E</original>
    <variation>D</variation>
    <location>
        <position position="67"/>
    </location>
</feature>
<feature type="sequence conflict" description="In Ref. 5; AAB07135." evidence="4" ref="5">
    <original>L</original>
    <variation>F</variation>
    <location>
        <position position="80"/>
    </location>
</feature>
<feature type="sequence conflict" description="In Ref. 5; AAB07135." evidence="4" ref="5">
    <original>K</original>
    <variation>R</variation>
    <location>
        <position position="126"/>
    </location>
</feature>
<dbReference type="EMBL" id="U41745">
    <property type="protein sequence ID" value="AAC50462.1"/>
    <property type="molecule type" value="mRNA"/>
</dbReference>
<dbReference type="EMBL" id="AC004922">
    <property type="protein sequence ID" value="AAF03506.1"/>
    <property type="molecule type" value="Genomic_DNA"/>
</dbReference>
<dbReference type="EMBL" id="CH471091">
    <property type="protein sequence ID" value="EAW76675.1"/>
    <property type="molecule type" value="Genomic_DNA"/>
</dbReference>
<dbReference type="EMBL" id="CH471091">
    <property type="protein sequence ID" value="EAW76676.1"/>
    <property type="molecule type" value="Genomic_DNA"/>
</dbReference>
<dbReference type="EMBL" id="BC000684">
    <property type="protein sequence ID" value="AAH00684.1"/>
    <property type="molecule type" value="mRNA"/>
</dbReference>
<dbReference type="EMBL" id="BC007873">
    <property type="protein sequence ID" value="AAH07873.1"/>
    <property type="molecule type" value="mRNA"/>
</dbReference>
<dbReference type="EMBL" id="U65960">
    <property type="protein sequence ID" value="AAB07135.1"/>
    <property type="molecule type" value="Genomic_DNA"/>
</dbReference>
<dbReference type="CCDS" id="CCDS5662.1"/>
<dbReference type="RefSeq" id="NP_055706.1">
    <property type="nucleotide sequence ID" value="NM_014891.7"/>
</dbReference>
<dbReference type="BioGRID" id="116461">
    <property type="interactions" value="109"/>
</dbReference>
<dbReference type="FunCoup" id="Q13442">
    <property type="interactions" value="2280"/>
</dbReference>
<dbReference type="IntAct" id="Q13442">
    <property type="interactions" value="36"/>
</dbReference>
<dbReference type="MINT" id="Q13442"/>
<dbReference type="STRING" id="9606.ENSP00000222968"/>
<dbReference type="GlyGen" id="Q13442">
    <property type="glycosylation" value="1 site, 1 O-linked glycan (1 site)"/>
</dbReference>
<dbReference type="iPTMnet" id="Q13442"/>
<dbReference type="MetOSite" id="Q13442"/>
<dbReference type="PhosphoSitePlus" id="Q13442"/>
<dbReference type="SwissPalm" id="Q13442"/>
<dbReference type="BioMuta" id="PDAP1"/>
<dbReference type="DMDM" id="2498464"/>
<dbReference type="jPOST" id="Q13442"/>
<dbReference type="MassIVE" id="Q13442"/>
<dbReference type="PaxDb" id="9606-ENSP00000222968"/>
<dbReference type="PeptideAtlas" id="Q13442"/>
<dbReference type="ProteomicsDB" id="59439"/>
<dbReference type="Pumba" id="Q13442"/>
<dbReference type="TopDownProteomics" id="Q13442"/>
<dbReference type="Antibodypedia" id="30327">
    <property type="antibodies" value="215 antibodies from 26 providers"/>
</dbReference>
<dbReference type="DNASU" id="11333"/>
<dbReference type="Ensembl" id="ENST00000350498.8">
    <property type="protein sequence ID" value="ENSP00000222968.4"/>
    <property type="gene ID" value="ENSG00000106244.13"/>
</dbReference>
<dbReference type="GeneID" id="11333"/>
<dbReference type="KEGG" id="hsa:11333"/>
<dbReference type="MANE-Select" id="ENST00000350498.8">
    <property type="protein sequence ID" value="ENSP00000222968.4"/>
    <property type="RefSeq nucleotide sequence ID" value="NM_014891.7"/>
    <property type="RefSeq protein sequence ID" value="NP_055706.1"/>
</dbReference>
<dbReference type="UCSC" id="uc003uqe.5">
    <property type="organism name" value="human"/>
</dbReference>
<dbReference type="AGR" id="HGNC:14634"/>
<dbReference type="CTD" id="11333"/>
<dbReference type="DisGeNET" id="11333"/>
<dbReference type="GeneCards" id="PDAP1"/>
<dbReference type="HGNC" id="HGNC:14634">
    <property type="gene designation" value="PDAP1"/>
</dbReference>
<dbReference type="HPA" id="ENSG00000106244">
    <property type="expression patterns" value="Low tissue specificity"/>
</dbReference>
<dbReference type="MIM" id="607075">
    <property type="type" value="gene"/>
</dbReference>
<dbReference type="neXtProt" id="NX_Q13442"/>
<dbReference type="OpenTargets" id="ENSG00000106244"/>
<dbReference type="PharmGKB" id="PA33102"/>
<dbReference type="VEuPathDB" id="HostDB:ENSG00000106244"/>
<dbReference type="eggNOG" id="KOG3375">
    <property type="taxonomic scope" value="Eukaryota"/>
</dbReference>
<dbReference type="GeneTree" id="ENSGT00390000018509"/>
<dbReference type="HOGENOM" id="CLU_084870_1_0_1"/>
<dbReference type="InParanoid" id="Q13442"/>
<dbReference type="OMA" id="IDMESPR"/>
<dbReference type="OrthoDB" id="21120at2759"/>
<dbReference type="PAN-GO" id="Q13442">
    <property type="GO annotations" value="1 GO annotation based on evolutionary models"/>
</dbReference>
<dbReference type="PhylomeDB" id="Q13442"/>
<dbReference type="TreeFam" id="TF324338"/>
<dbReference type="PathwayCommons" id="Q13442"/>
<dbReference type="Reactome" id="R-HSA-6798695">
    <property type="pathway name" value="Neutrophil degranulation"/>
</dbReference>
<dbReference type="SignaLink" id="Q13442"/>
<dbReference type="BioGRID-ORCS" id="11333">
    <property type="hits" value="482 hits in 1139 CRISPR screens"/>
</dbReference>
<dbReference type="CD-CODE" id="DEE660B4">
    <property type="entry name" value="Stress granule"/>
</dbReference>
<dbReference type="ChiTaRS" id="PDAP1">
    <property type="organism name" value="human"/>
</dbReference>
<dbReference type="GeneWiki" id="PDAP1"/>
<dbReference type="GenomeRNAi" id="11333"/>
<dbReference type="Pharos" id="Q13442">
    <property type="development level" value="Tbio"/>
</dbReference>
<dbReference type="PRO" id="PR:Q13442"/>
<dbReference type="Proteomes" id="UP000005640">
    <property type="component" value="Chromosome 7"/>
</dbReference>
<dbReference type="RNAct" id="Q13442">
    <property type="molecule type" value="protein"/>
</dbReference>
<dbReference type="Bgee" id="ENSG00000106244">
    <property type="expression patterns" value="Expressed in gastrocnemius and 201 other cell types or tissues"/>
</dbReference>
<dbReference type="ExpressionAtlas" id="Q13442">
    <property type="expression patterns" value="baseline and differential"/>
</dbReference>
<dbReference type="GO" id="GO:0005829">
    <property type="term" value="C:cytosol"/>
    <property type="evidence" value="ECO:0000314"/>
    <property type="project" value="HPA"/>
</dbReference>
<dbReference type="GO" id="GO:0005576">
    <property type="term" value="C:extracellular region"/>
    <property type="evidence" value="ECO:0000304"/>
    <property type="project" value="Reactome"/>
</dbReference>
<dbReference type="GO" id="GO:1904813">
    <property type="term" value="C:ficolin-1-rich granule lumen"/>
    <property type="evidence" value="ECO:0000304"/>
    <property type="project" value="Reactome"/>
</dbReference>
<dbReference type="GO" id="GO:0005886">
    <property type="term" value="C:plasma membrane"/>
    <property type="evidence" value="ECO:0000314"/>
    <property type="project" value="HPA"/>
</dbReference>
<dbReference type="GO" id="GO:0003723">
    <property type="term" value="F:RNA binding"/>
    <property type="evidence" value="ECO:0007005"/>
    <property type="project" value="UniProtKB"/>
</dbReference>
<dbReference type="GO" id="GO:0007165">
    <property type="term" value="P:signal transduction"/>
    <property type="evidence" value="ECO:0000304"/>
    <property type="project" value="ProtInc"/>
</dbReference>
<dbReference type="InterPro" id="IPR019380">
    <property type="entry name" value="Casein_kinase_sb_PP28"/>
</dbReference>
<dbReference type="InterPro" id="IPR039876">
    <property type="entry name" value="HAP28"/>
</dbReference>
<dbReference type="PANTHER" id="PTHR22055">
    <property type="entry name" value="28 KDA HEAT- AND ACID-STABLE PHOSPHOPROTEIN PDGF-ASSOCIATED PROTEIN"/>
    <property type="match status" value="1"/>
</dbReference>
<dbReference type="Pfam" id="PF10252">
    <property type="entry name" value="PP28"/>
    <property type="match status" value="1"/>
</dbReference>
<evidence type="ECO:0000250" key="1"/>
<evidence type="ECO:0000250" key="2">
    <source>
        <dbReference type="UniProtKB" id="Q3UHX2"/>
    </source>
</evidence>
<evidence type="ECO:0000256" key="3">
    <source>
        <dbReference type="SAM" id="MobiDB-lite"/>
    </source>
</evidence>
<evidence type="ECO:0000305" key="4"/>
<evidence type="ECO:0007744" key="5">
    <source>
    </source>
</evidence>
<evidence type="ECO:0007744" key="6">
    <source>
    </source>
</evidence>
<evidence type="ECO:0007744" key="7">
    <source>
    </source>
</evidence>
<evidence type="ECO:0007744" key="8">
    <source>
    </source>
</evidence>
<evidence type="ECO:0007744" key="9">
    <source>
    </source>
</evidence>
<evidence type="ECO:0007744" key="10">
    <source>
    </source>
</evidence>
<evidence type="ECO:0007744" key="11">
    <source>
    </source>
</evidence>
<evidence type="ECO:0007744" key="12">
    <source>
    </source>
</evidence>
<evidence type="ECO:0007744" key="13">
    <source>
    </source>
</evidence>
<evidence type="ECO:0007744" key="14">
    <source>
    </source>
</evidence>
<evidence type="ECO:0007744" key="15">
    <source>
    </source>
</evidence>
<evidence type="ECO:0007744" key="16">
    <source>
    </source>
</evidence>
<evidence type="ECO:0007744" key="17">
    <source>
    </source>
</evidence>
<name>HAP28_HUMAN</name>
<organism>
    <name type="scientific">Homo sapiens</name>
    <name type="common">Human</name>
    <dbReference type="NCBI Taxonomy" id="9606"/>
    <lineage>
        <taxon>Eukaryota</taxon>
        <taxon>Metazoa</taxon>
        <taxon>Chordata</taxon>
        <taxon>Craniata</taxon>
        <taxon>Vertebrata</taxon>
        <taxon>Euteleostomi</taxon>
        <taxon>Mammalia</taxon>
        <taxon>Eutheria</taxon>
        <taxon>Euarchontoglires</taxon>
        <taxon>Primates</taxon>
        <taxon>Haplorrhini</taxon>
        <taxon>Catarrhini</taxon>
        <taxon>Hominidae</taxon>
        <taxon>Homo</taxon>
    </lineage>
</organism>
<sequence>MPKGGRKGGHKGRARQYTSPEEIDAQLQAEKQKAREEEEQKEGGDGAAGDPKKEKKSLDSDESEDEEDDYQQKRKGVEGLIDIENPNRVAQTTKKVTQLDLDGPKELSRREREEIEKQKAKERYMKMHLAGKTEQAKADLARLAIIRKQREEAARKKEEERKAKDDATLSGKRMQSLSLNK</sequence>
<accession>Q13442</accession>
<accession>D6W5S5</accession>
<accession>Q92906</accession>
<protein>
    <recommendedName>
        <fullName>28 kDa heat- and acid-stable phosphoprotein</fullName>
    </recommendedName>
    <alternativeName>
        <fullName>PDGF-associated protein</fullName>
        <shortName>PAP</shortName>
    </alternativeName>
    <alternativeName>
        <fullName>PDGFA-associated protein 1</fullName>
        <shortName>PAP1</shortName>
    </alternativeName>
</protein>
<reference key="1">
    <citation type="journal article" date="1996" name="J. Neurochem.">
        <title>Characterization of a novel platelet-derived growth factor-associated protein.</title>
        <authorList>
            <person name="Fischer W.H."/>
            <person name="Schubert D."/>
        </authorList>
    </citation>
    <scope>NUCLEOTIDE SEQUENCE [MRNA]</scope>
    <source>
        <tissue>Neuroretina</tissue>
    </source>
</reference>
<reference key="2">
    <citation type="journal article" date="2003" name="Nature">
        <title>The DNA sequence of human chromosome 7.</title>
        <authorList>
            <person name="Hillier L.W."/>
            <person name="Fulton R.S."/>
            <person name="Fulton L.A."/>
            <person name="Graves T.A."/>
            <person name="Pepin K.H."/>
            <person name="Wagner-McPherson C."/>
            <person name="Layman D."/>
            <person name="Maas J."/>
            <person name="Jaeger S."/>
            <person name="Walker R."/>
            <person name="Wylie K."/>
            <person name="Sekhon M."/>
            <person name="Becker M.C."/>
            <person name="O'Laughlin M.D."/>
            <person name="Schaller M.E."/>
            <person name="Fewell G.A."/>
            <person name="Delehaunty K.D."/>
            <person name="Miner T.L."/>
            <person name="Nash W.E."/>
            <person name="Cordes M."/>
            <person name="Du H."/>
            <person name="Sun H."/>
            <person name="Edwards J."/>
            <person name="Bradshaw-Cordum H."/>
            <person name="Ali J."/>
            <person name="Andrews S."/>
            <person name="Isak A."/>
            <person name="Vanbrunt A."/>
            <person name="Nguyen C."/>
            <person name="Du F."/>
            <person name="Lamar B."/>
            <person name="Courtney L."/>
            <person name="Kalicki J."/>
            <person name="Ozersky P."/>
            <person name="Bielicki L."/>
            <person name="Scott K."/>
            <person name="Holmes A."/>
            <person name="Harkins R."/>
            <person name="Harris A."/>
            <person name="Strong C.M."/>
            <person name="Hou S."/>
            <person name="Tomlinson C."/>
            <person name="Dauphin-Kohlberg S."/>
            <person name="Kozlowicz-Reilly A."/>
            <person name="Leonard S."/>
            <person name="Rohlfing T."/>
            <person name="Rock S.M."/>
            <person name="Tin-Wollam A.-M."/>
            <person name="Abbott A."/>
            <person name="Minx P."/>
            <person name="Maupin R."/>
            <person name="Strowmatt C."/>
            <person name="Latreille P."/>
            <person name="Miller N."/>
            <person name="Johnson D."/>
            <person name="Murray J."/>
            <person name="Woessner J.P."/>
            <person name="Wendl M.C."/>
            <person name="Yang S.-P."/>
            <person name="Schultz B.R."/>
            <person name="Wallis J.W."/>
            <person name="Spieth J."/>
            <person name="Bieri T.A."/>
            <person name="Nelson J.O."/>
            <person name="Berkowicz N."/>
            <person name="Wohldmann P.E."/>
            <person name="Cook L.L."/>
            <person name="Hickenbotham M.T."/>
            <person name="Eldred J."/>
            <person name="Williams D."/>
            <person name="Bedell J.A."/>
            <person name="Mardis E.R."/>
            <person name="Clifton S.W."/>
            <person name="Chissoe S.L."/>
            <person name="Marra M.A."/>
            <person name="Raymond C."/>
            <person name="Haugen E."/>
            <person name="Gillett W."/>
            <person name="Zhou Y."/>
            <person name="James R."/>
            <person name="Phelps K."/>
            <person name="Iadanoto S."/>
            <person name="Bubb K."/>
            <person name="Simms E."/>
            <person name="Levy R."/>
            <person name="Clendenning J."/>
            <person name="Kaul R."/>
            <person name="Kent W.J."/>
            <person name="Furey T.S."/>
            <person name="Baertsch R.A."/>
            <person name="Brent M.R."/>
            <person name="Keibler E."/>
            <person name="Flicek P."/>
            <person name="Bork P."/>
            <person name="Suyama M."/>
            <person name="Bailey J.A."/>
            <person name="Portnoy M.E."/>
            <person name="Torrents D."/>
            <person name="Chinwalla A.T."/>
            <person name="Gish W.R."/>
            <person name="Eddy S.R."/>
            <person name="McPherson J.D."/>
            <person name="Olson M.V."/>
            <person name="Eichler E.E."/>
            <person name="Green E.D."/>
            <person name="Waterston R.H."/>
            <person name="Wilson R.K."/>
        </authorList>
    </citation>
    <scope>NUCLEOTIDE SEQUENCE [LARGE SCALE GENOMIC DNA]</scope>
</reference>
<reference key="3">
    <citation type="submission" date="2005-09" db="EMBL/GenBank/DDBJ databases">
        <authorList>
            <person name="Mural R.J."/>
            <person name="Istrail S."/>
            <person name="Sutton G.G."/>
            <person name="Florea L."/>
            <person name="Halpern A.L."/>
            <person name="Mobarry C.M."/>
            <person name="Lippert R."/>
            <person name="Walenz B."/>
            <person name="Shatkay H."/>
            <person name="Dew I."/>
            <person name="Miller J.R."/>
            <person name="Flanigan M.J."/>
            <person name="Edwards N.J."/>
            <person name="Bolanos R."/>
            <person name="Fasulo D."/>
            <person name="Halldorsson B.V."/>
            <person name="Hannenhalli S."/>
            <person name="Turner R."/>
            <person name="Yooseph S."/>
            <person name="Lu F."/>
            <person name="Nusskern D.R."/>
            <person name="Shue B.C."/>
            <person name="Zheng X.H."/>
            <person name="Zhong F."/>
            <person name="Delcher A.L."/>
            <person name="Huson D.H."/>
            <person name="Kravitz S.A."/>
            <person name="Mouchard L."/>
            <person name="Reinert K."/>
            <person name="Remington K.A."/>
            <person name="Clark A.G."/>
            <person name="Waterman M.S."/>
            <person name="Eichler E.E."/>
            <person name="Adams M.D."/>
            <person name="Hunkapiller M.W."/>
            <person name="Myers E.W."/>
            <person name="Venter J.C."/>
        </authorList>
    </citation>
    <scope>NUCLEOTIDE SEQUENCE [LARGE SCALE GENOMIC DNA]</scope>
</reference>
<reference key="4">
    <citation type="journal article" date="2004" name="Genome Res.">
        <title>The status, quality, and expansion of the NIH full-length cDNA project: the Mammalian Gene Collection (MGC).</title>
        <authorList>
            <consortium name="The MGC Project Team"/>
        </authorList>
    </citation>
    <scope>NUCLEOTIDE SEQUENCE [LARGE SCALE MRNA]</scope>
    <source>
        <tissue>Kidney</tissue>
        <tissue>Uterus</tissue>
    </source>
</reference>
<reference key="5">
    <citation type="submission" date="1996-09" db="EMBL/GenBank/DDBJ databases">
        <title>5' flanking sequence of HASPP28.</title>
        <authorList>
            <person name="Huang F.L."/>
        </authorList>
    </citation>
    <scope>NUCLEOTIDE SEQUENCE [GENOMIC DNA] OF 1-171</scope>
</reference>
<reference key="6">
    <citation type="journal article" date="2006" name="Cell">
        <title>Global, in vivo, and site-specific phosphorylation dynamics in signaling networks.</title>
        <authorList>
            <person name="Olsen J.V."/>
            <person name="Blagoev B."/>
            <person name="Gnad F."/>
            <person name="Macek B."/>
            <person name="Kumar C."/>
            <person name="Mortensen P."/>
            <person name="Mann M."/>
        </authorList>
    </citation>
    <scope>PHOSPHORYLATION [LARGE SCALE ANALYSIS] AT SER-63</scope>
    <scope>IDENTIFICATION BY MASS SPECTROMETRY [LARGE SCALE ANALYSIS]</scope>
    <source>
        <tissue>Cervix carcinoma</tissue>
    </source>
</reference>
<reference key="7">
    <citation type="journal article" date="2007" name="Electrophoresis">
        <title>Toward a global characterization of the phosphoproteome in prostate cancer cells: identification of phosphoproteins in the LNCaP cell line.</title>
        <authorList>
            <person name="Giorgianni F."/>
            <person name="Zhao Y."/>
            <person name="Desiderio D.M."/>
            <person name="Beranova-Giorgianni S."/>
        </authorList>
    </citation>
    <scope>PHOSPHORYLATION [LARGE SCALE ANALYSIS] AT SER-63</scope>
    <scope>IDENTIFICATION BY MASS SPECTROMETRY [LARGE SCALE ANALYSIS]</scope>
    <source>
        <tissue>Prostate cancer</tissue>
    </source>
</reference>
<reference key="8">
    <citation type="journal article" date="2008" name="J. Proteome Res.">
        <title>Phosphoproteome of resting human platelets.</title>
        <authorList>
            <person name="Zahedi R.P."/>
            <person name="Lewandrowski U."/>
            <person name="Wiesner J."/>
            <person name="Wortelkamp S."/>
            <person name="Moebius J."/>
            <person name="Schuetz C."/>
            <person name="Walter U."/>
            <person name="Gambaryan S."/>
            <person name="Sickmann A."/>
        </authorList>
    </citation>
    <scope>PHOSPHORYLATION [LARGE SCALE ANALYSIS] AT SER-60 AND SER-63</scope>
    <scope>IDENTIFICATION BY MASS SPECTROMETRY [LARGE SCALE ANALYSIS]</scope>
    <source>
        <tissue>Platelet</tissue>
    </source>
</reference>
<reference key="9">
    <citation type="journal article" date="2008" name="Proc. Natl. Acad. Sci. U.S.A.">
        <title>A quantitative atlas of mitotic phosphorylation.</title>
        <authorList>
            <person name="Dephoure N."/>
            <person name="Zhou C."/>
            <person name="Villen J."/>
            <person name="Beausoleil S.A."/>
            <person name="Bakalarski C.E."/>
            <person name="Elledge S.J."/>
            <person name="Gygi S.P."/>
        </authorList>
    </citation>
    <scope>PHOSPHORYLATION [LARGE SCALE ANALYSIS] AT SER-19; SER-57; SER-60; SER-63 AND SER-176</scope>
    <scope>IDENTIFICATION BY MASS SPECTROMETRY [LARGE SCALE ANALYSIS]</scope>
    <source>
        <tissue>Cervix carcinoma</tissue>
    </source>
</reference>
<reference key="10">
    <citation type="journal article" date="2008" name="Proteomics">
        <title>Large-scale phosphoproteome analysis of human liver tissue by enrichment and fractionation of phosphopeptides with strong anion exchange chromatography.</title>
        <authorList>
            <person name="Han G."/>
            <person name="Ye M."/>
            <person name="Zhou H."/>
            <person name="Jiang X."/>
            <person name="Feng S."/>
            <person name="Jiang X."/>
            <person name="Tian R."/>
            <person name="Wan D."/>
            <person name="Zou H."/>
            <person name="Gu J."/>
        </authorList>
    </citation>
    <scope>PHOSPHORYLATION [LARGE SCALE ANALYSIS] AT SER-57; SER-60 AND SER-63</scope>
    <scope>IDENTIFICATION BY MASS SPECTROMETRY [LARGE SCALE ANALYSIS]</scope>
    <source>
        <tissue>Liver</tissue>
    </source>
</reference>
<reference key="11">
    <citation type="journal article" date="2009" name="Anal. Chem.">
        <title>Lys-N and trypsin cover complementary parts of the phosphoproteome in a refined SCX-based approach.</title>
        <authorList>
            <person name="Gauci S."/>
            <person name="Helbig A.O."/>
            <person name="Slijper M."/>
            <person name="Krijgsveld J."/>
            <person name="Heck A.J."/>
            <person name="Mohammed S."/>
        </authorList>
    </citation>
    <scope>IDENTIFICATION BY MASS SPECTROMETRY [LARGE SCALE ANALYSIS]</scope>
</reference>
<reference key="12">
    <citation type="journal article" date="2009" name="Sci. Signal.">
        <title>Quantitative phosphoproteomic analysis of T cell receptor signaling reveals system-wide modulation of protein-protein interactions.</title>
        <authorList>
            <person name="Mayya V."/>
            <person name="Lundgren D.H."/>
            <person name="Hwang S.-I."/>
            <person name="Rezaul K."/>
            <person name="Wu L."/>
            <person name="Eng J.K."/>
            <person name="Rodionov V."/>
            <person name="Han D.K."/>
        </authorList>
    </citation>
    <scope>PHOSPHORYLATION [LARGE SCALE ANALYSIS] AT SER-60; SER-63 AND SER-176</scope>
    <scope>IDENTIFICATION BY MASS SPECTROMETRY [LARGE SCALE ANALYSIS]</scope>
    <source>
        <tissue>Leukemic T-cell</tissue>
    </source>
</reference>
<reference key="13">
    <citation type="journal article" date="2009" name="Science">
        <title>Lysine acetylation targets protein complexes and co-regulates major cellular functions.</title>
        <authorList>
            <person name="Choudhary C."/>
            <person name="Kumar C."/>
            <person name="Gnad F."/>
            <person name="Nielsen M.L."/>
            <person name="Rehman M."/>
            <person name="Walther T.C."/>
            <person name="Olsen J.V."/>
            <person name="Mann M."/>
        </authorList>
    </citation>
    <scope>ACETYLATION [LARGE SCALE ANALYSIS] AT LYS-132</scope>
    <scope>IDENTIFICATION BY MASS SPECTROMETRY [LARGE SCALE ANALYSIS]</scope>
</reference>
<reference key="14">
    <citation type="journal article" date="2010" name="Sci. Signal.">
        <title>Quantitative phosphoproteomics reveals widespread full phosphorylation site occupancy during mitosis.</title>
        <authorList>
            <person name="Olsen J.V."/>
            <person name="Vermeulen M."/>
            <person name="Santamaria A."/>
            <person name="Kumar C."/>
            <person name="Miller M.L."/>
            <person name="Jensen L.J."/>
            <person name="Gnad F."/>
            <person name="Cox J."/>
            <person name="Jensen T.S."/>
            <person name="Nigg E.A."/>
            <person name="Brunak S."/>
            <person name="Mann M."/>
        </authorList>
    </citation>
    <scope>PHOSPHORYLATION [LARGE SCALE ANALYSIS] AT SER-19; SER-57; SER-60; SER-63 AND SER-176</scope>
    <scope>IDENTIFICATION BY MASS SPECTROMETRY [LARGE SCALE ANALYSIS]</scope>
    <source>
        <tissue>Cervix carcinoma</tissue>
    </source>
</reference>
<reference key="15">
    <citation type="journal article" date="2011" name="BMC Syst. Biol.">
        <title>Initial characterization of the human central proteome.</title>
        <authorList>
            <person name="Burkard T.R."/>
            <person name="Planyavsky M."/>
            <person name="Kaupe I."/>
            <person name="Breitwieser F.P."/>
            <person name="Buerckstuemmer T."/>
            <person name="Bennett K.L."/>
            <person name="Superti-Furga G."/>
            <person name="Colinge J."/>
        </authorList>
    </citation>
    <scope>IDENTIFICATION BY MASS SPECTROMETRY [LARGE SCALE ANALYSIS]</scope>
</reference>
<reference key="16">
    <citation type="journal article" date="2011" name="Sci. Signal.">
        <title>System-wide temporal characterization of the proteome and phosphoproteome of human embryonic stem cell differentiation.</title>
        <authorList>
            <person name="Rigbolt K.T."/>
            <person name="Prokhorova T.A."/>
            <person name="Akimov V."/>
            <person name="Henningsen J."/>
            <person name="Johansen P.T."/>
            <person name="Kratchmarova I."/>
            <person name="Kassem M."/>
            <person name="Mann M."/>
            <person name="Olsen J.V."/>
            <person name="Blagoev B."/>
        </authorList>
    </citation>
    <scope>PHOSPHORYLATION [LARGE SCALE ANALYSIS] AT SER-60 AND SER-63</scope>
    <scope>IDENTIFICATION BY MASS SPECTROMETRY [LARGE SCALE ANALYSIS]</scope>
</reference>
<reference key="17">
    <citation type="journal article" date="2013" name="J. Proteome Res.">
        <title>Toward a comprehensive characterization of a human cancer cell phosphoproteome.</title>
        <authorList>
            <person name="Zhou H."/>
            <person name="Di Palma S."/>
            <person name="Preisinger C."/>
            <person name="Peng M."/>
            <person name="Polat A.N."/>
            <person name="Heck A.J."/>
            <person name="Mohammed S."/>
        </authorList>
    </citation>
    <scope>PHOSPHORYLATION [LARGE SCALE ANALYSIS] AT THR-18; SER-19; SER-60; SER-63; SER-176 AND SER-178</scope>
    <scope>IDENTIFICATION BY MASS SPECTROMETRY [LARGE SCALE ANALYSIS]</scope>
    <source>
        <tissue>Cervix carcinoma</tissue>
        <tissue>Erythroleukemia</tissue>
    </source>
</reference>
<reference key="18">
    <citation type="journal article" date="2014" name="J. Proteomics">
        <title>An enzyme assisted RP-RPLC approach for in-depth analysis of human liver phosphoproteome.</title>
        <authorList>
            <person name="Bian Y."/>
            <person name="Song C."/>
            <person name="Cheng K."/>
            <person name="Dong M."/>
            <person name="Wang F."/>
            <person name="Huang J."/>
            <person name="Sun D."/>
            <person name="Wang L."/>
            <person name="Ye M."/>
            <person name="Zou H."/>
        </authorList>
    </citation>
    <scope>PHOSPHORYLATION [LARGE SCALE ANALYSIS] AT SER-57; SER-60 AND SER-63</scope>
    <scope>IDENTIFICATION BY MASS SPECTROMETRY [LARGE SCALE ANALYSIS]</scope>
    <source>
        <tissue>Liver</tissue>
    </source>
</reference>
<reference key="19">
    <citation type="journal article" date="2014" name="Mol. Cell. Proteomics">
        <title>Immunoaffinity enrichment and mass spectrometry analysis of protein methylation.</title>
        <authorList>
            <person name="Guo A."/>
            <person name="Gu H."/>
            <person name="Zhou J."/>
            <person name="Mulhern D."/>
            <person name="Wang Y."/>
            <person name="Lee K.A."/>
            <person name="Yang V."/>
            <person name="Aguiar M."/>
            <person name="Kornhauser J."/>
            <person name="Jia X."/>
            <person name="Ren J."/>
            <person name="Beausoleil S.A."/>
            <person name="Silva J.C."/>
            <person name="Vemulapalli V."/>
            <person name="Bedford M.T."/>
            <person name="Comb M.J."/>
        </authorList>
    </citation>
    <scope>METHYLATION [LARGE SCALE ANALYSIS] AT LYS-126</scope>
    <scope>IDENTIFICATION BY MASS SPECTROMETRY [LARGE SCALE ANALYSIS]</scope>
    <source>
        <tissue>Colon carcinoma</tissue>
    </source>
</reference>
<reference key="20">
    <citation type="journal article" date="2015" name="Proteomics">
        <title>N-terminome analysis of the human mitochondrial proteome.</title>
        <authorList>
            <person name="Vaca Jacome A.S."/>
            <person name="Rabilloud T."/>
            <person name="Schaeffer-Reiss C."/>
            <person name="Rompais M."/>
            <person name="Ayoub D."/>
            <person name="Lane L."/>
            <person name="Bairoch A."/>
            <person name="Van Dorsselaer A."/>
            <person name="Carapito C."/>
        </authorList>
    </citation>
    <scope>IDENTIFICATION BY MASS SPECTROMETRY [LARGE SCALE ANALYSIS]</scope>
</reference>
<reference key="21">
    <citation type="journal article" date="2017" name="Nat. Struct. Mol. Biol.">
        <title>Site-specific mapping of the human SUMO proteome reveals co-modification with phosphorylation.</title>
        <authorList>
            <person name="Hendriks I.A."/>
            <person name="Lyon D."/>
            <person name="Young C."/>
            <person name="Jensen L.J."/>
            <person name="Vertegaal A.C."/>
            <person name="Nielsen M.L."/>
        </authorList>
    </citation>
    <scope>SUMOYLATION [LARGE SCALE ANALYSIS] AT LYS-52</scope>
    <scope>IDENTIFICATION BY MASS SPECTROMETRY [LARGE SCALE ANALYSIS]</scope>
</reference>
<keyword id="KW-0007">Acetylation</keyword>
<keyword id="KW-1017">Isopeptide bond</keyword>
<keyword id="KW-0488">Methylation</keyword>
<keyword id="KW-0597">Phosphoprotein</keyword>
<keyword id="KW-1267">Proteomics identification</keyword>
<keyword id="KW-1185">Reference proteome</keyword>
<keyword id="KW-0832">Ubl conjugation</keyword>
<comment type="function">
    <text evidence="1">Enhances PDGFA-stimulated cell growth in fibroblasts, but inhibits the mitogenic effect of PDGFB.</text>
</comment>
<comment type="interaction">
    <interactant intactId="EBI-1390763">
        <id>Q13442</id>
    </interactant>
    <interactant intactId="EBI-6426427">
        <id>Q8N4N3</id>
        <label>KLHL36</label>
    </interactant>
    <organismsDiffer>false</organismsDiffer>
    <experiments>2</experiments>
</comment>
<comment type="interaction">
    <interactant intactId="EBI-1390763">
        <id>Q13442</id>
    </interactant>
    <interactant intactId="EBI-448369">
        <id>Q96FA3</id>
        <label>PELI1</label>
    </interactant>
    <organismsDiffer>false</organismsDiffer>
    <experiments>3</experiments>
</comment>
<comment type="similarity">
    <text evidence="4">Belongs to the PDAP1 family.</text>
</comment>
<gene>
    <name type="primary">PDAP1</name>
    <name type="synonym">HASPP28</name>
</gene>
<proteinExistence type="evidence at protein level"/>